<evidence type="ECO:0000255" key="1">
    <source>
        <dbReference type="HAMAP-Rule" id="MF_01058"/>
    </source>
</evidence>
<evidence type="ECO:0000256" key="2">
    <source>
        <dbReference type="SAM" id="MobiDB-lite"/>
    </source>
</evidence>
<dbReference type="EMBL" id="AE017143">
    <property type="protein sequence ID" value="AAP96466.1"/>
    <property type="molecule type" value="Genomic_DNA"/>
</dbReference>
<dbReference type="RefSeq" id="WP_010945495.1">
    <property type="nucleotide sequence ID" value="NC_002940.2"/>
</dbReference>
<dbReference type="SMR" id="Q7VKZ7"/>
<dbReference type="STRING" id="233412.HD_1706"/>
<dbReference type="KEGG" id="hdu:HD_1706"/>
<dbReference type="eggNOG" id="COG3078">
    <property type="taxonomic scope" value="Bacteria"/>
</dbReference>
<dbReference type="HOGENOM" id="CLU_094104_2_0_6"/>
<dbReference type="OrthoDB" id="5677577at2"/>
<dbReference type="Proteomes" id="UP000001022">
    <property type="component" value="Chromosome"/>
</dbReference>
<dbReference type="GO" id="GO:0005096">
    <property type="term" value="F:GTPase activator activity"/>
    <property type="evidence" value="ECO:0007669"/>
    <property type="project" value="UniProtKB-KW"/>
</dbReference>
<dbReference type="GO" id="GO:0042254">
    <property type="term" value="P:ribosome biogenesis"/>
    <property type="evidence" value="ECO:0007669"/>
    <property type="project" value="UniProtKB-KW"/>
</dbReference>
<dbReference type="HAMAP" id="MF_01058">
    <property type="entry name" value="GAP_YihI"/>
    <property type="match status" value="1"/>
</dbReference>
<dbReference type="InterPro" id="IPR007336">
    <property type="entry name" value="YihI"/>
</dbReference>
<dbReference type="NCBIfam" id="NF003560">
    <property type="entry name" value="PRK05244.1-1"/>
    <property type="match status" value="1"/>
</dbReference>
<dbReference type="Pfam" id="PF04220">
    <property type="entry name" value="YihI"/>
    <property type="match status" value="1"/>
</dbReference>
<gene>
    <name evidence="1" type="primary">yihI</name>
    <name type="ordered locus">HD_1706</name>
</gene>
<keyword id="KW-0343">GTPase activation</keyword>
<keyword id="KW-1185">Reference proteome</keyword>
<keyword id="KW-0690">Ribosome biogenesis</keyword>
<comment type="function">
    <text evidence="1">A GTPase-activating protein (GAP) that modifies Der/EngA GTPase function. May play a role in ribosome biogenesis.</text>
</comment>
<comment type="subunit">
    <text evidence="1">Interacts with Der.</text>
</comment>
<comment type="similarity">
    <text evidence="1">Belongs to the YihI family.</text>
</comment>
<reference key="1">
    <citation type="submission" date="2003-06" db="EMBL/GenBank/DDBJ databases">
        <title>The complete genome sequence of Haemophilus ducreyi.</title>
        <authorList>
            <person name="Munson R.S. Jr."/>
            <person name="Ray W.C."/>
            <person name="Mahairas G."/>
            <person name="Sabo P."/>
            <person name="Mungur R."/>
            <person name="Johnson L."/>
            <person name="Nguyen D."/>
            <person name="Wang J."/>
            <person name="Forst C."/>
            <person name="Hood L."/>
        </authorList>
    </citation>
    <scope>NUCLEOTIDE SEQUENCE [LARGE SCALE GENOMIC DNA]</scope>
    <source>
        <strain>35000HP / ATCC 700724</strain>
    </source>
</reference>
<accession>Q7VKZ7</accession>
<sequence length="194" mass="22235">MSRSKKTRRISDIMPARKADKKPALPISNSKKRKPTRYELDVQAREEKKKRKHKGLPTGSRNVITEQKTASAKVKKDPRVGSRKKVPLMVEFVNKPEKGQMIKPVPLEPSNHATKATVSPEVELTQLENNECLNQLLDQLEAGKVLSTQDQQFVDECLDRVHELIIELGIEDDEENNEDLLLRQFETIDINKFK</sequence>
<protein>
    <recommendedName>
        <fullName evidence="1">Der GTPase-activating protein YihI</fullName>
    </recommendedName>
</protein>
<organism>
    <name type="scientific">Haemophilus ducreyi (strain 35000HP / ATCC 700724)</name>
    <dbReference type="NCBI Taxonomy" id="233412"/>
    <lineage>
        <taxon>Bacteria</taxon>
        <taxon>Pseudomonadati</taxon>
        <taxon>Pseudomonadota</taxon>
        <taxon>Gammaproteobacteria</taxon>
        <taxon>Pasteurellales</taxon>
        <taxon>Pasteurellaceae</taxon>
        <taxon>Haemophilus</taxon>
    </lineage>
</organism>
<proteinExistence type="inferred from homology"/>
<name>YIHI_HAEDU</name>
<feature type="chain" id="PRO_0000209585" description="Der GTPase-activating protein YihI">
    <location>
        <begin position="1"/>
        <end position="194"/>
    </location>
</feature>
<feature type="region of interest" description="Disordered" evidence="2">
    <location>
        <begin position="1"/>
        <end position="81"/>
    </location>
</feature>
<feature type="compositionally biased region" description="Basic and acidic residues" evidence="2">
    <location>
        <begin position="9"/>
        <end position="23"/>
    </location>
</feature>
<feature type="compositionally biased region" description="Basic and acidic residues" evidence="2">
    <location>
        <begin position="36"/>
        <end position="47"/>
    </location>
</feature>
<feature type="compositionally biased region" description="Polar residues" evidence="2">
    <location>
        <begin position="59"/>
        <end position="70"/>
    </location>
</feature>